<protein>
    <recommendedName>
        <fullName evidence="5">Guanine nucleotide-binding protein subunit beta</fullName>
    </recommendedName>
    <alternativeName>
        <fullName evidence="3">WD40 repeat-containing protein 80</fullName>
        <shortName evidence="3">OsWD40-80</shortName>
    </alternativeName>
</protein>
<accession>Q40687</accession>
<accession>A0A0P0W176</accession>
<accession>F6M2M6</accession>
<accession>Q0DPR1</accession>
<accession>Q10FF8</accession>
<accession>Q7G5X0</accession>
<comment type="function">
    <text evidence="5">Guanine nucleotide-binding proteins (G proteins) are involved as modulators or transducers in various transmembrane signaling systems. The beta and gamma chains are required for the GTPase activity, for replacement of GDP by GTP, and for G protein-effector interaction.</text>
</comment>
<comment type="subunit">
    <text evidence="1">G proteins are composed of 3 units, alpha, beta and gamma. Interacts with the gamma subunits RGG1 and RGG2.</text>
</comment>
<comment type="interaction">
    <interactant intactId="EBI-1100119">
        <id>Q40687</id>
    </interactant>
    <interactant intactId="EBI-1100098">
        <id>Q0DJ33</id>
        <label>GPA1</label>
    </interactant>
    <organismsDiffer>false</organismsDiffer>
    <experiments>2</experiments>
</comment>
<comment type="interaction">
    <interactant intactId="EBI-1100119">
        <id>Q40687</id>
    </interactant>
    <interactant intactId="EBI-1100093">
        <id>Q75WU1</id>
        <label>RGG1</label>
    </interactant>
    <organismsDiffer>false</organismsDiffer>
    <experiments>4</experiments>
</comment>
<comment type="interaction">
    <interactant intactId="EBI-1100119">
        <id>Q40687</id>
    </interactant>
    <interactant intactId="EBI-1100089">
        <id>Q6YXX9</id>
        <label>RGG2</label>
    </interactant>
    <organismsDiffer>false</organismsDiffer>
    <experiments>4</experiments>
</comment>
<comment type="subcellular location">
    <subcellularLocation>
        <location evidence="2">Cell membrane</location>
    </subcellularLocation>
</comment>
<comment type="similarity">
    <text evidence="5">Belongs to the WD repeat G protein beta family.</text>
</comment>
<comment type="sequence caution" evidence="5">
    <conflict type="erroneous gene model prediction">
        <sequence resource="EMBL-CDS" id="BAF12777"/>
    </conflict>
</comment>
<name>GBB_ORYSJ</name>
<feature type="chain" id="PRO_0000127725" description="Guanine nucleotide-binding protein subunit beta">
    <location>
        <begin position="1"/>
        <end position="380"/>
    </location>
</feature>
<feature type="repeat" description="WD 1">
    <location>
        <begin position="64"/>
        <end position="94"/>
    </location>
</feature>
<feature type="repeat" description="WD 2">
    <location>
        <begin position="106"/>
        <end position="136"/>
    </location>
</feature>
<feature type="repeat" description="WD 3">
    <location>
        <begin position="155"/>
        <end position="186"/>
    </location>
</feature>
<feature type="repeat" description="WD 4">
    <location>
        <begin position="203"/>
        <end position="234"/>
    </location>
</feature>
<feature type="repeat" description="WD 5">
    <location>
        <begin position="247"/>
        <end position="277"/>
    </location>
</feature>
<feature type="repeat" description="WD 6">
    <location>
        <begin position="296"/>
        <end position="326"/>
    </location>
</feature>
<feature type="repeat" description="WD 7">
    <location>
        <begin position="342"/>
        <end position="372"/>
    </location>
</feature>
<organism>
    <name type="scientific">Oryza sativa subsp. japonica</name>
    <name type="common">Rice</name>
    <dbReference type="NCBI Taxonomy" id="39947"/>
    <lineage>
        <taxon>Eukaryota</taxon>
        <taxon>Viridiplantae</taxon>
        <taxon>Streptophyta</taxon>
        <taxon>Embryophyta</taxon>
        <taxon>Tracheophyta</taxon>
        <taxon>Spermatophyta</taxon>
        <taxon>Magnoliopsida</taxon>
        <taxon>Liliopsida</taxon>
        <taxon>Poales</taxon>
        <taxon>Poaceae</taxon>
        <taxon>BOP clade</taxon>
        <taxon>Oryzoideae</taxon>
        <taxon>Oryzeae</taxon>
        <taxon>Oryzinae</taxon>
        <taxon>Oryza</taxon>
        <taxon>Oryza sativa</taxon>
    </lineage>
</organism>
<dbReference type="EMBL" id="X89737">
    <property type="protein sequence ID" value="CAA61889.1"/>
    <property type="molecule type" value="Genomic_DNA"/>
</dbReference>
<dbReference type="EMBL" id="AC133930">
    <property type="protein sequence ID" value="AAP44640.1"/>
    <property type="molecule type" value="Genomic_DNA"/>
</dbReference>
<dbReference type="EMBL" id="DP000009">
    <property type="protein sequence ID" value="ABF98102.1"/>
    <property type="molecule type" value="Genomic_DNA"/>
</dbReference>
<dbReference type="EMBL" id="AP008209">
    <property type="protein sequence ID" value="BAF12777.2"/>
    <property type="status" value="ALT_SEQ"/>
    <property type="molecule type" value="Genomic_DNA"/>
</dbReference>
<dbReference type="EMBL" id="AP014959">
    <property type="protein sequence ID" value="BAS85669.1"/>
    <property type="molecule type" value="Genomic_DNA"/>
</dbReference>
<dbReference type="EMBL" id="AK242811">
    <property type="protein sequence ID" value="BAH01349.1"/>
    <property type="molecule type" value="mRNA"/>
</dbReference>
<dbReference type="EMBL" id="JF712554">
    <property type="protein sequence ID" value="AEE69019.1"/>
    <property type="molecule type" value="mRNA"/>
</dbReference>
<dbReference type="PIR" id="T03765">
    <property type="entry name" value="T03765"/>
</dbReference>
<dbReference type="RefSeq" id="XP_015631079.1">
    <property type="nucleotide sequence ID" value="XM_015775593.1"/>
</dbReference>
<dbReference type="SMR" id="Q40687"/>
<dbReference type="FunCoup" id="Q40687">
    <property type="interactions" value="2364"/>
</dbReference>
<dbReference type="IntAct" id="Q40687">
    <property type="interactions" value="3"/>
</dbReference>
<dbReference type="STRING" id="39947.Q40687"/>
<dbReference type="PaxDb" id="39947-Q40687"/>
<dbReference type="EnsemblPlants" id="Os03t0669200-01">
    <property type="protein sequence ID" value="Os03t0669200-01"/>
    <property type="gene ID" value="Os03g0669200"/>
</dbReference>
<dbReference type="Gramene" id="Os03t0669200-01">
    <property type="protein sequence ID" value="Os03t0669200-01"/>
    <property type="gene ID" value="Os03g0669200"/>
</dbReference>
<dbReference type="KEGG" id="dosa:Os03g0669200"/>
<dbReference type="eggNOG" id="KOG0286">
    <property type="taxonomic scope" value="Eukaryota"/>
</dbReference>
<dbReference type="HOGENOM" id="CLU_000288_57_34_1"/>
<dbReference type="InParanoid" id="Q40687"/>
<dbReference type="OMA" id="PLDSQWV"/>
<dbReference type="OrthoDB" id="10255630at2759"/>
<dbReference type="PlantReactome" id="R-OSA-9035605">
    <property type="pathway name" value="Regulation of seed size"/>
</dbReference>
<dbReference type="Proteomes" id="UP000000763">
    <property type="component" value="Chromosome 3"/>
</dbReference>
<dbReference type="Proteomes" id="UP000059680">
    <property type="component" value="Chromosome 3"/>
</dbReference>
<dbReference type="GO" id="GO:0080008">
    <property type="term" value="C:Cul4-RING E3 ubiquitin ligase complex"/>
    <property type="evidence" value="ECO:0007669"/>
    <property type="project" value="EnsemblPlants"/>
</dbReference>
<dbReference type="GO" id="GO:0005737">
    <property type="term" value="C:cytoplasm"/>
    <property type="evidence" value="ECO:0000318"/>
    <property type="project" value="GO_Central"/>
</dbReference>
<dbReference type="GO" id="GO:0005783">
    <property type="term" value="C:endoplasmic reticulum"/>
    <property type="evidence" value="ECO:0007669"/>
    <property type="project" value="EnsemblPlants"/>
</dbReference>
<dbReference type="GO" id="GO:0005834">
    <property type="term" value="C:heterotrimeric G-protein complex"/>
    <property type="evidence" value="ECO:0000318"/>
    <property type="project" value="GO_Central"/>
</dbReference>
<dbReference type="GO" id="GO:0005886">
    <property type="term" value="C:plasma membrane"/>
    <property type="evidence" value="ECO:0000314"/>
    <property type="project" value="UniProtKB"/>
</dbReference>
<dbReference type="GO" id="GO:0030159">
    <property type="term" value="F:signaling receptor complex adaptor activity"/>
    <property type="evidence" value="ECO:0000318"/>
    <property type="project" value="GO_Central"/>
</dbReference>
<dbReference type="GO" id="GO:0050832">
    <property type="term" value="P:defense response to fungus"/>
    <property type="evidence" value="ECO:0007669"/>
    <property type="project" value="EnsemblPlants"/>
</dbReference>
<dbReference type="GO" id="GO:0030968">
    <property type="term" value="P:endoplasmic reticulum unfolded protein response"/>
    <property type="evidence" value="ECO:0007669"/>
    <property type="project" value="EnsemblPlants"/>
</dbReference>
<dbReference type="GO" id="GO:0010154">
    <property type="term" value="P:fruit development"/>
    <property type="evidence" value="ECO:0007669"/>
    <property type="project" value="EnsemblPlants"/>
</dbReference>
<dbReference type="GO" id="GO:0007186">
    <property type="term" value="P:G protein-coupled receptor signaling pathway"/>
    <property type="evidence" value="ECO:0000270"/>
    <property type="project" value="Gramene"/>
</dbReference>
<dbReference type="GO" id="GO:0009867">
    <property type="term" value="P:jasmonic acid mediated signaling pathway"/>
    <property type="evidence" value="ECO:0007669"/>
    <property type="project" value="EnsemblPlants"/>
</dbReference>
<dbReference type="GO" id="GO:0048527">
    <property type="term" value="P:lateral root development"/>
    <property type="evidence" value="ECO:0007669"/>
    <property type="project" value="EnsemblPlants"/>
</dbReference>
<dbReference type="GO" id="GO:1905392">
    <property type="term" value="P:plant organ morphogenesis"/>
    <property type="evidence" value="ECO:0007669"/>
    <property type="project" value="EnsemblPlants"/>
</dbReference>
<dbReference type="GO" id="GO:0072593">
    <property type="term" value="P:reactive oxygen species metabolic process"/>
    <property type="evidence" value="ECO:0007669"/>
    <property type="project" value="EnsemblPlants"/>
</dbReference>
<dbReference type="GO" id="GO:2000280">
    <property type="term" value="P:regulation of root development"/>
    <property type="evidence" value="ECO:0007669"/>
    <property type="project" value="EnsemblPlants"/>
</dbReference>
<dbReference type="GO" id="GO:0009723">
    <property type="term" value="P:response to ethylene"/>
    <property type="evidence" value="ECO:0007669"/>
    <property type="project" value="EnsemblPlants"/>
</dbReference>
<dbReference type="GO" id="GO:0009845">
    <property type="term" value="P:seed germination"/>
    <property type="evidence" value="ECO:0007669"/>
    <property type="project" value="EnsemblPlants"/>
</dbReference>
<dbReference type="GO" id="GO:0010118">
    <property type="term" value="P:stomatal movement"/>
    <property type="evidence" value="ECO:0007669"/>
    <property type="project" value="EnsemblPlants"/>
</dbReference>
<dbReference type="CDD" id="cd00200">
    <property type="entry name" value="WD40"/>
    <property type="match status" value="1"/>
</dbReference>
<dbReference type="FunFam" id="2.130.10.10:FF:000580">
    <property type="entry name" value="Guanine nucleotide-binding protein subunit beta"/>
    <property type="match status" value="1"/>
</dbReference>
<dbReference type="Gene3D" id="2.130.10.10">
    <property type="entry name" value="YVTN repeat-like/Quinoprotein amine dehydrogenase"/>
    <property type="match status" value="1"/>
</dbReference>
<dbReference type="InterPro" id="IPR020472">
    <property type="entry name" value="G-protein_beta_WD-40_rep"/>
</dbReference>
<dbReference type="InterPro" id="IPR001632">
    <property type="entry name" value="Gprotein_B"/>
</dbReference>
<dbReference type="InterPro" id="IPR016346">
    <property type="entry name" value="Guanine_nucleotide-bd_bsu"/>
</dbReference>
<dbReference type="InterPro" id="IPR015943">
    <property type="entry name" value="WD40/YVTN_repeat-like_dom_sf"/>
</dbReference>
<dbReference type="InterPro" id="IPR019775">
    <property type="entry name" value="WD40_repeat_CS"/>
</dbReference>
<dbReference type="InterPro" id="IPR036322">
    <property type="entry name" value="WD40_repeat_dom_sf"/>
</dbReference>
<dbReference type="InterPro" id="IPR001680">
    <property type="entry name" value="WD40_rpt"/>
</dbReference>
<dbReference type="PANTHER" id="PTHR19850">
    <property type="entry name" value="GUANINE NUCLEOTIDE-BINDING PROTEIN BETA G PROTEIN BETA"/>
    <property type="match status" value="1"/>
</dbReference>
<dbReference type="Pfam" id="PF25391">
    <property type="entry name" value="WD40_Gbeta"/>
    <property type="match status" value="1"/>
</dbReference>
<dbReference type="PIRSF" id="PIRSF002394">
    <property type="entry name" value="GN-bd_beta"/>
    <property type="match status" value="1"/>
</dbReference>
<dbReference type="PRINTS" id="PR00319">
    <property type="entry name" value="GPROTEINB"/>
</dbReference>
<dbReference type="PRINTS" id="PR00320">
    <property type="entry name" value="GPROTEINBRPT"/>
</dbReference>
<dbReference type="SMART" id="SM00320">
    <property type="entry name" value="WD40"/>
    <property type="match status" value="7"/>
</dbReference>
<dbReference type="SUPFAM" id="SSF50978">
    <property type="entry name" value="WD40 repeat-like"/>
    <property type="match status" value="1"/>
</dbReference>
<dbReference type="PROSITE" id="PS00678">
    <property type="entry name" value="WD_REPEATS_1"/>
    <property type="match status" value="3"/>
</dbReference>
<dbReference type="PROSITE" id="PS50082">
    <property type="entry name" value="WD_REPEATS_2"/>
    <property type="match status" value="5"/>
</dbReference>
<dbReference type="PROSITE" id="PS50294">
    <property type="entry name" value="WD_REPEATS_REGION"/>
    <property type="match status" value="1"/>
</dbReference>
<proteinExistence type="evidence at protein level"/>
<reference key="1">
    <citation type="journal article" date="1996" name="Plant Cell Physiol.">
        <title>Molecular cloning and characterization of a cDNA for the beta subunit of a G protein from rice.</title>
        <authorList>
            <person name="Ishikawa A."/>
            <person name="Iwasaki Y."/>
            <person name="Asahi T."/>
        </authorList>
    </citation>
    <scope>NUCLEOTIDE SEQUENCE [GENOMIC DNA]</scope>
    <source>
        <strain>cv. Nipponbare</strain>
    </source>
</reference>
<reference key="2">
    <citation type="journal article" date="2005" name="Genome Res.">
        <title>Sequence, annotation, and analysis of synteny between rice chromosome 3 and diverged grass species.</title>
        <authorList>
            <consortium name="The rice chromosome 3 sequencing consortium"/>
            <person name="Buell C.R."/>
            <person name="Yuan Q."/>
            <person name="Ouyang S."/>
            <person name="Liu J."/>
            <person name="Zhu W."/>
            <person name="Wang A."/>
            <person name="Maiti R."/>
            <person name="Haas B."/>
            <person name="Wortman J."/>
            <person name="Pertea M."/>
            <person name="Jones K.M."/>
            <person name="Kim M."/>
            <person name="Overton L."/>
            <person name="Tsitrin T."/>
            <person name="Fadrosh D."/>
            <person name="Bera J."/>
            <person name="Weaver B."/>
            <person name="Jin S."/>
            <person name="Johri S."/>
            <person name="Reardon M."/>
            <person name="Webb K."/>
            <person name="Hill J."/>
            <person name="Moffat K."/>
            <person name="Tallon L."/>
            <person name="Van Aken S."/>
            <person name="Lewis M."/>
            <person name="Utterback T."/>
            <person name="Feldblyum T."/>
            <person name="Zismann V."/>
            <person name="Iobst S."/>
            <person name="Hsiao J."/>
            <person name="de Vazeille A.R."/>
            <person name="Salzberg S.L."/>
            <person name="White O."/>
            <person name="Fraser C.M."/>
            <person name="Yu Y."/>
            <person name="Kim H."/>
            <person name="Rambo T."/>
            <person name="Currie J."/>
            <person name="Collura K."/>
            <person name="Kernodle-Thompson S."/>
            <person name="Wei F."/>
            <person name="Kudrna K."/>
            <person name="Ammiraju J.S.S."/>
            <person name="Luo M."/>
            <person name="Goicoechea J.L."/>
            <person name="Wing R.A."/>
            <person name="Henry D."/>
            <person name="Oates R."/>
            <person name="Palmer M."/>
            <person name="Pries G."/>
            <person name="Saski C."/>
            <person name="Simmons J."/>
            <person name="Soderlund C."/>
            <person name="Nelson W."/>
            <person name="de la Bastide M."/>
            <person name="Spiegel L."/>
            <person name="Nascimento L."/>
            <person name="Huang E."/>
            <person name="Preston R."/>
            <person name="Zutavern T."/>
            <person name="Palmer L."/>
            <person name="O'Shaughnessy A."/>
            <person name="Dike S."/>
            <person name="McCombie W.R."/>
            <person name="Minx P."/>
            <person name="Cordum H."/>
            <person name="Wilson R."/>
            <person name="Jin W."/>
            <person name="Lee H.R."/>
            <person name="Jiang J."/>
            <person name="Jackson S."/>
        </authorList>
    </citation>
    <scope>NUCLEOTIDE SEQUENCE [LARGE SCALE GENOMIC DNA]</scope>
    <source>
        <strain>cv. Nipponbare</strain>
    </source>
</reference>
<reference key="3">
    <citation type="journal article" date="2005" name="Nature">
        <title>The map-based sequence of the rice genome.</title>
        <authorList>
            <consortium name="International rice genome sequencing project (IRGSP)"/>
        </authorList>
    </citation>
    <scope>NUCLEOTIDE SEQUENCE [LARGE SCALE GENOMIC DNA]</scope>
    <source>
        <strain>cv. Nipponbare</strain>
    </source>
</reference>
<reference key="4">
    <citation type="journal article" date="2008" name="Nucleic Acids Res.">
        <title>The rice annotation project database (RAP-DB): 2008 update.</title>
        <authorList>
            <consortium name="The rice annotation project (RAP)"/>
        </authorList>
    </citation>
    <scope>GENOME REANNOTATION</scope>
    <source>
        <strain>cv. Nipponbare</strain>
    </source>
</reference>
<reference key="5">
    <citation type="journal article" date="2013" name="Rice">
        <title>Improvement of the Oryza sativa Nipponbare reference genome using next generation sequence and optical map data.</title>
        <authorList>
            <person name="Kawahara Y."/>
            <person name="de la Bastide M."/>
            <person name="Hamilton J.P."/>
            <person name="Kanamori H."/>
            <person name="McCombie W.R."/>
            <person name="Ouyang S."/>
            <person name="Schwartz D.C."/>
            <person name="Tanaka T."/>
            <person name="Wu J."/>
            <person name="Zhou S."/>
            <person name="Childs K.L."/>
            <person name="Davidson R.M."/>
            <person name="Lin H."/>
            <person name="Quesada-Ocampo L."/>
            <person name="Vaillancourt B."/>
            <person name="Sakai H."/>
            <person name="Lee S.S."/>
            <person name="Kim J."/>
            <person name="Numa H."/>
            <person name="Itoh T."/>
            <person name="Buell C.R."/>
            <person name="Matsumoto T."/>
        </authorList>
    </citation>
    <scope>GENOME REANNOTATION</scope>
    <source>
        <strain>cv. Nipponbare</strain>
    </source>
</reference>
<reference key="6">
    <citation type="submission" date="2006-10" db="EMBL/GenBank/DDBJ databases">
        <title>Oryza sativa full length cDNA.</title>
        <authorList>
            <consortium name="The rice full-length cDNA consortium"/>
        </authorList>
    </citation>
    <scope>NUCLEOTIDE SEQUENCE [LARGE SCALE MRNA]</scope>
    <source>
        <strain>cv. Nipponbare</strain>
    </source>
</reference>
<reference key="7">
    <citation type="submission" date="2011-03" db="EMBL/GenBank/DDBJ databases">
        <title>Screening and Identifying the Interaction Proteins of RACK1 in Rice.</title>
        <authorList>
            <person name="Zhang D."/>
            <person name="Liang J."/>
        </authorList>
    </citation>
    <scope>NUCLEOTIDE SEQUENCE [MRNA] OF 1-378</scope>
    <source>
        <strain>cv. Nipponbare</strain>
    </source>
</reference>
<reference key="8">
    <citation type="journal article" date="2004" name="Plant J.">
        <title>Characterization of heterotrimeric G protein complexes in rice plasma membrane.</title>
        <authorList>
            <person name="Kato C."/>
            <person name="Mizutani T."/>
            <person name="Tamaki H."/>
            <person name="Kumagai H."/>
            <person name="Kamiya T."/>
            <person name="Hirobe A."/>
            <person name="Fujisawa Y."/>
            <person name="Kato H."/>
            <person name="Iwasaki Y."/>
        </authorList>
    </citation>
    <scope>SUBUNIT</scope>
    <scope>INTERACTION WITH RGG1 AND RGG2</scope>
    <scope>SUBCELLULAR LOCATION</scope>
</reference>
<reference key="9">
    <citation type="journal article" date="2012" name="BMC Genomics">
        <title>Genomic survey, expression profile and co-expression network analysis of OsWD40 family in rice.</title>
        <authorList>
            <person name="Ouyang Y."/>
            <person name="Huang X."/>
            <person name="Lu Z."/>
            <person name="Yao J."/>
        </authorList>
    </citation>
    <scope>GENE FAMILY</scope>
    <scope>NOMENCLATURE</scope>
</reference>
<keyword id="KW-1003">Cell membrane</keyword>
<keyword id="KW-0472">Membrane</keyword>
<keyword id="KW-1185">Reference proteome</keyword>
<keyword id="KW-0677">Repeat</keyword>
<keyword id="KW-0807">Transducer</keyword>
<keyword id="KW-0853">WD repeat</keyword>
<sequence>MASVAELKEKHAAATASVNSLRERLRQRRQMLLDTDVERYSRTQGRTPVSFNPTDLVCCRTLQGHSGKVYSLDWTPEKNWIVSASQDGRLIVWNALTSQKTHAIKLHCPWVMTCAFAPNGQSVACGGLDSACSIFNLNSQADRDGNIPVSRILTGHKGYVSSCQYVPDQETRLITSSGDQTCVLWDVTTGQRISIFGGEFPSGHTADVLSLSINSSNSNMFVSGSCDATVRLWDIRIASRAVRTYHGHEGDINSVKFFPDGQRFGTGSDDGTCRLFDVRTGHQLQVYSREPDRNDNELPTVTSIAFSISGRLLFAGYSNGDCYVWDTLLAEVVLNLGNLQNSHEGRISCLGLSSDGSALCTGSWDKNLKIWAFSGHRKIV</sequence>
<evidence type="ECO:0000269" key="1">
    <source>
    </source>
</evidence>
<evidence type="ECO:0000269" key="2">
    <source>
    </source>
</evidence>
<evidence type="ECO:0000303" key="3">
    <source>
    </source>
</evidence>
<evidence type="ECO:0000303" key="4">
    <source>
    </source>
</evidence>
<evidence type="ECO:0000305" key="5"/>
<evidence type="ECO:0000312" key="6">
    <source>
        <dbReference type="EMBL" id="ABF98102.1"/>
    </source>
</evidence>
<evidence type="ECO:0000312" key="7">
    <source>
        <dbReference type="EMBL" id="BAF12777.2"/>
    </source>
</evidence>
<gene>
    <name evidence="4" type="primary">RGB1</name>
    <name evidence="7" type="ordered locus">Os03g0669200</name>
    <name evidence="6" type="ordered locus">LOC_Os03g46650</name>
    <name type="ORF">OSJNBa0039O18.9</name>
</gene>